<accession>Q1JGV8</accession>
<dbReference type="EC" id="1.7.1.7" evidence="1"/>
<dbReference type="EMBL" id="CP000260">
    <property type="protein sequence ID" value="ABF34036.1"/>
    <property type="status" value="ALT_INIT"/>
    <property type="molecule type" value="Genomic_DNA"/>
</dbReference>
<dbReference type="RefSeq" id="WP_011054482.1">
    <property type="nucleotide sequence ID" value="NZ_CVUH01000005.1"/>
</dbReference>
<dbReference type="SMR" id="Q1JGV8"/>
<dbReference type="GeneID" id="69900878"/>
<dbReference type="KEGG" id="sph:MGAS10270_Spy0971"/>
<dbReference type="HOGENOM" id="CLU_022552_5_0_9"/>
<dbReference type="Proteomes" id="UP000002436">
    <property type="component" value="Chromosome"/>
</dbReference>
<dbReference type="GO" id="GO:0005829">
    <property type="term" value="C:cytosol"/>
    <property type="evidence" value="ECO:0007669"/>
    <property type="project" value="TreeGrafter"/>
</dbReference>
<dbReference type="GO" id="GO:1902560">
    <property type="term" value="C:GMP reductase complex"/>
    <property type="evidence" value="ECO:0007669"/>
    <property type="project" value="InterPro"/>
</dbReference>
<dbReference type="GO" id="GO:0003920">
    <property type="term" value="F:GMP reductase activity"/>
    <property type="evidence" value="ECO:0007669"/>
    <property type="project" value="UniProtKB-UniRule"/>
</dbReference>
<dbReference type="GO" id="GO:0006163">
    <property type="term" value="P:purine nucleotide metabolic process"/>
    <property type="evidence" value="ECO:0007669"/>
    <property type="project" value="UniProtKB-UniRule"/>
</dbReference>
<dbReference type="CDD" id="cd00381">
    <property type="entry name" value="IMPDH"/>
    <property type="match status" value="1"/>
</dbReference>
<dbReference type="FunFam" id="3.20.20.70:FF:000424">
    <property type="entry name" value="Inosine-5'-monophosphate dehydrogenase 2"/>
    <property type="match status" value="1"/>
</dbReference>
<dbReference type="Gene3D" id="3.20.20.70">
    <property type="entry name" value="Aldolase class I"/>
    <property type="match status" value="1"/>
</dbReference>
<dbReference type="HAMAP" id="MF_01511">
    <property type="entry name" value="GMP_reduct_type2"/>
    <property type="match status" value="1"/>
</dbReference>
<dbReference type="InterPro" id="IPR013785">
    <property type="entry name" value="Aldolase_TIM"/>
</dbReference>
<dbReference type="InterPro" id="IPR050139">
    <property type="entry name" value="GMP_reductase"/>
</dbReference>
<dbReference type="InterPro" id="IPR005994">
    <property type="entry name" value="GuaC_type_2"/>
</dbReference>
<dbReference type="InterPro" id="IPR015875">
    <property type="entry name" value="IMP_DH/GMP_Rdtase_CS"/>
</dbReference>
<dbReference type="InterPro" id="IPR001093">
    <property type="entry name" value="IMP_DH_GMPRt"/>
</dbReference>
<dbReference type="NCBIfam" id="TIGR01306">
    <property type="entry name" value="GMP_reduct_2"/>
    <property type="match status" value="1"/>
</dbReference>
<dbReference type="NCBIfam" id="NF003966">
    <property type="entry name" value="PRK05458.1"/>
    <property type="match status" value="1"/>
</dbReference>
<dbReference type="PANTHER" id="PTHR43170">
    <property type="entry name" value="GMP REDUCTASE"/>
    <property type="match status" value="1"/>
</dbReference>
<dbReference type="PANTHER" id="PTHR43170:SF5">
    <property type="entry name" value="GMP REDUCTASE"/>
    <property type="match status" value="1"/>
</dbReference>
<dbReference type="Pfam" id="PF00478">
    <property type="entry name" value="IMPDH"/>
    <property type="match status" value="1"/>
</dbReference>
<dbReference type="PIRSF" id="PIRSF036500">
    <property type="entry name" value="GMP_red_Firmic"/>
    <property type="match status" value="1"/>
</dbReference>
<dbReference type="SMART" id="SM01240">
    <property type="entry name" value="IMPDH"/>
    <property type="match status" value="1"/>
</dbReference>
<dbReference type="SUPFAM" id="SSF51412">
    <property type="entry name" value="Inosine monophosphate dehydrogenase (IMPDH)"/>
    <property type="match status" value="1"/>
</dbReference>
<dbReference type="PROSITE" id="PS00487">
    <property type="entry name" value="IMP_DH_GMP_RED"/>
    <property type="match status" value="1"/>
</dbReference>
<name>GUAC_STRPD</name>
<sequence>MFNDIPVFDYEDIQLIPNKCIITSRSQADTSVTLGKYQFKLPVIPANMQTIIDETIAEQLAKEGYFYIMHRFDEDSRKPFIKRMHEQGLIASISVGVKACEYEFVTSLKEDAPEFITIDIAHGHANSVIDMIKHIKTELPETFVIAGNVGTPEAVRELENAGADATKVGIGPGKVCITKVKTGFGTGGWQLAALRWCAKAARKPIIADGGIRTHGDIAKSIRFGASMVMIGSLFAGHIESPGKTVEVDGETFKEYYGSASEYQKGEHKNVEGKKILLPTKGHLSDTLTEMQQDLQSSISYAGGKDLDSLRHVDYVIVKNSIWNGDSI</sequence>
<keyword id="KW-0521">NADP</keyword>
<keyword id="KW-0560">Oxidoreductase</keyword>
<gene>
    <name evidence="1" type="primary">guaC</name>
    <name type="ordered locus">MGAS10270_Spy0971</name>
</gene>
<reference key="1">
    <citation type="journal article" date="2006" name="Proc. Natl. Acad. Sci. U.S.A.">
        <title>Molecular genetic anatomy of inter- and intraserotype variation in the human bacterial pathogen group A Streptococcus.</title>
        <authorList>
            <person name="Beres S.B."/>
            <person name="Richter E.W."/>
            <person name="Nagiec M.J."/>
            <person name="Sumby P."/>
            <person name="Porcella S.F."/>
            <person name="DeLeo F.R."/>
            <person name="Musser J.M."/>
        </authorList>
    </citation>
    <scope>NUCLEOTIDE SEQUENCE [LARGE SCALE GENOMIC DNA]</scope>
    <source>
        <strain>MGAS10270</strain>
    </source>
</reference>
<proteinExistence type="inferred from homology"/>
<feature type="chain" id="PRO_0000292057" description="GMP reductase">
    <location>
        <begin position="1"/>
        <end position="327"/>
    </location>
</feature>
<feature type="active site" description="Thioimidate intermediate" evidence="1">
    <location>
        <position position="176"/>
    </location>
</feature>
<feature type="binding site" evidence="1">
    <location>
        <begin position="205"/>
        <end position="228"/>
    </location>
    <ligand>
        <name>NADP(+)</name>
        <dbReference type="ChEBI" id="CHEBI:58349"/>
    </ligand>
</feature>
<evidence type="ECO:0000255" key="1">
    <source>
        <dbReference type="HAMAP-Rule" id="MF_01511"/>
    </source>
</evidence>
<evidence type="ECO:0000305" key="2"/>
<comment type="function">
    <text evidence="1">Catalyzes the irreversible NADPH-dependent deamination of GMP to IMP. It functions in the conversion of nucleobase, nucleoside and nucleotide derivatives of G to A nucleotides, and in maintaining the intracellular balance of A and G nucleotides.</text>
</comment>
<comment type="catalytic activity">
    <reaction evidence="1">
        <text>IMP + NH4(+) + NADP(+) = GMP + NADPH + 2 H(+)</text>
        <dbReference type="Rhea" id="RHEA:17185"/>
        <dbReference type="ChEBI" id="CHEBI:15378"/>
        <dbReference type="ChEBI" id="CHEBI:28938"/>
        <dbReference type="ChEBI" id="CHEBI:57783"/>
        <dbReference type="ChEBI" id="CHEBI:58053"/>
        <dbReference type="ChEBI" id="CHEBI:58115"/>
        <dbReference type="ChEBI" id="CHEBI:58349"/>
        <dbReference type="EC" id="1.7.1.7"/>
    </reaction>
</comment>
<comment type="similarity">
    <text evidence="1">Belongs to the IMPDH/GMPR family. GuaC type 2 subfamily.</text>
</comment>
<comment type="sequence caution" evidence="2">
    <conflict type="erroneous initiation">
        <sequence resource="EMBL-CDS" id="ABF34036"/>
    </conflict>
</comment>
<organism>
    <name type="scientific">Streptococcus pyogenes serotype M2 (strain MGAS10270)</name>
    <dbReference type="NCBI Taxonomy" id="370552"/>
    <lineage>
        <taxon>Bacteria</taxon>
        <taxon>Bacillati</taxon>
        <taxon>Bacillota</taxon>
        <taxon>Bacilli</taxon>
        <taxon>Lactobacillales</taxon>
        <taxon>Streptococcaceae</taxon>
        <taxon>Streptococcus</taxon>
    </lineage>
</organism>
<protein>
    <recommendedName>
        <fullName evidence="1">GMP reductase</fullName>
        <ecNumber evidence="1">1.7.1.7</ecNumber>
    </recommendedName>
    <alternativeName>
        <fullName evidence="1">Guanosine 5'-monophosphate oxidoreductase</fullName>
        <shortName evidence="1">Guanosine monophosphate reductase</shortName>
    </alternativeName>
</protein>